<accession>P65196</accession>
<accession>Q9JR24</accession>
<sequence length="176" mass="19941">MKFVSDLLSVILFFATYTVTKNMIAATAVALVAGVVQAAFLYWKYKKLDTMQWVGLVLIVVFGGATIVLGDSRFIMWKPSVLFWLGALFLWGSHLAGKNGLKASIGREIQLPDAVWAKLTYMWVGFLIFMGIANWFVFTRFESQWVNYKMFGSTALMLVFFIIQGIYLSTCLKKED</sequence>
<gene>
    <name evidence="1" type="primary">yciB</name>
    <name type="ordered locus">NMB0342</name>
</gene>
<proteinExistence type="inferred from homology"/>
<dbReference type="EMBL" id="AE002098">
    <property type="protein sequence ID" value="AAF40785.1"/>
    <property type="molecule type" value="Genomic_DNA"/>
</dbReference>
<dbReference type="PIR" id="D81209">
    <property type="entry name" value="D81209"/>
</dbReference>
<dbReference type="RefSeq" id="NP_273391.1">
    <property type="nucleotide sequence ID" value="NC_003112.2"/>
</dbReference>
<dbReference type="RefSeq" id="WP_002212347.1">
    <property type="nucleotide sequence ID" value="NC_003112.2"/>
</dbReference>
<dbReference type="FunCoup" id="P65196">
    <property type="interactions" value="78"/>
</dbReference>
<dbReference type="STRING" id="122586.NMB0342"/>
<dbReference type="PaxDb" id="122586-NMB0342"/>
<dbReference type="KEGG" id="nme:NMB0342"/>
<dbReference type="PATRIC" id="fig|122586.8.peg.434"/>
<dbReference type="HOGENOM" id="CLU_089554_2_0_4"/>
<dbReference type="InParanoid" id="P65196"/>
<dbReference type="OrthoDB" id="9788219at2"/>
<dbReference type="Proteomes" id="UP000000425">
    <property type="component" value="Chromosome"/>
</dbReference>
<dbReference type="GO" id="GO:0005886">
    <property type="term" value="C:plasma membrane"/>
    <property type="evidence" value="ECO:0000318"/>
    <property type="project" value="GO_Central"/>
</dbReference>
<dbReference type="HAMAP" id="MF_00189">
    <property type="entry name" value="YciB"/>
    <property type="match status" value="1"/>
</dbReference>
<dbReference type="InterPro" id="IPR006008">
    <property type="entry name" value="YciB"/>
</dbReference>
<dbReference type="NCBIfam" id="TIGR00997">
    <property type="entry name" value="ispZ"/>
    <property type="match status" value="1"/>
</dbReference>
<dbReference type="NCBIfam" id="NF001325">
    <property type="entry name" value="PRK00259.1-3"/>
    <property type="match status" value="1"/>
</dbReference>
<dbReference type="PANTHER" id="PTHR36917:SF1">
    <property type="entry name" value="INNER MEMBRANE-SPANNING PROTEIN YCIB"/>
    <property type="match status" value="1"/>
</dbReference>
<dbReference type="PANTHER" id="PTHR36917">
    <property type="entry name" value="INTRACELLULAR SEPTATION PROTEIN A-RELATED"/>
    <property type="match status" value="1"/>
</dbReference>
<dbReference type="Pfam" id="PF04279">
    <property type="entry name" value="IspA"/>
    <property type="match status" value="1"/>
</dbReference>
<reference key="1">
    <citation type="journal article" date="2000" name="Science">
        <title>Complete genome sequence of Neisseria meningitidis serogroup B strain MC58.</title>
        <authorList>
            <person name="Tettelin H."/>
            <person name="Saunders N.J."/>
            <person name="Heidelberg J.F."/>
            <person name="Jeffries A.C."/>
            <person name="Nelson K.E."/>
            <person name="Eisen J.A."/>
            <person name="Ketchum K.A."/>
            <person name="Hood D.W."/>
            <person name="Peden J.F."/>
            <person name="Dodson R.J."/>
            <person name="Nelson W.C."/>
            <person name="Gwinn M.L."/>
            <person name="DeBoy R.T."/>
            <person name="Peterson J.D."/>
            <person name="Hickey E.K."/>
            <person name="Haft D.H."/>
            <person name="Salzberg S.L."/>
            <person name="White O."/>
            <person name="Fleischmann R.D."/>
            <person name="Dougherty B.A."/>
            <person name="Mason T.M."/>
            <person name="Ciecko A."/>
            <person name="Parksey D.S."/>
            <person name="Blair E."/>
            <person name="Cittone H."/>
            <person name="Clark E.B."/>
            <person name="Cotton M.D."/>
            <person name="Utterback T.R."/>
            <person name="Khouri H.M."/>
            <person name="Qin H."/>
            <person name="Vamathevan J.J."/>
            <person name="Gill J."/>
            <person name="Scarlato V."/>
            <person name="Masignani V."/>
            <person name="Pizza M."/>
            <person name="Grandi G."/>
            <person name="Sun L."/>
            <person name="Smith H.O."/>
            <person name="Fraser C.M."/>
            <person name="Moxon E.R."/>
            <person name="Rappuoli R."/>
            <person name="Venter J.C."/>
        </authorList>
    </citation>
    <scope>NUCLEOTIDE SEQUENCE [LARGE SCALE GENOMIC DNA]</scope>
    <source>
        <strain>ATCC BAA-335 / MC58</strain>
    </source>
</reference>
<evidence type="ECO:0000255" key="1">
    <source>
        <dbReference type="HAMAP-Rule" id="MF_00189"/>
    </source>
</evidence>
<protein>
    <recommendedName>
        <fullName evidence="1">Inner membrane-spanning protein YciB</fullName>
    </recommendedName>
</protein>
<feature type="chain" id="PRO_0000206537" description="Inner membrane-spanning protein YciB">
    <location>
        <begin position="1"/>
        <end position="176"/>
    </location>
</feature>
<feature type="transmembrane region" description="Helical" evidence="1">
    <location>
        <begin position="23"/>
        <end position="43"/>
    </location>
</feature>
<feature type="transmembrane region" description="Helical" evidence="1">
    <location>
        <begin position="50"/>
        <end position="70"/>
    </location>
</feature>
<feature type="transmembrane region" description="Helical" evidence="1">
    <location>
        <begin position="74"/>
        <end position="94"/>
    </location>
</feature>
<feature type="transmembrane region" description="Helical" evidence="1">
    <location>
        <begin position="119"/>
        <end position="139"/>
    </location>
</feature>
<feature type="transmembrane region" description="Helical" evidence="1">
    <location>
        <begin position="150"/>
        <end position="170"/>
    </location>
</feature>
<keyword id="KW-0997">Cell inner membrane</keyword>
<keyword id="KW-1003">Cell membrane</keyword>
<keyword id="KW-0472">Membrane</keyword>
<keyword id="KW-1185">Reference proteome</keyword>
<keyword id="KW-0812">Transmembrane</keyword>
<keyword id="KW-1133">Transmembrane helix</keyword>
<comment type="function">
    <text evidence="1">Plays a role in cell envelope biogenesis, maintenance of cell envelope integrity and membrane homeostasis.</text>
</comment>
<comment type="subcellular location">
    <subcellularLocation>
        <location evidence="1">Cell inner membrane</location>
        <topology evidence="1">Multi-pass membrane protein</topology>
    </subcellularLocation>
</comment>
<comment type="similarity">
    <text evidence="1">Belongs to the YciB family.</text>
</comment>
<name>YCIB_NEIMB</name>
<organism>
    <name type="scientific">Neisseria meningitidis serogroup B (strain ATCC BAA-335 / MC58)</name>
    <dbReference type="NCBI Taxonomy" id="122586"/>
    <lineage>
        <taxon>Bacteria</taxon>
        <taxon>Pseudomonadati</taxon>
        <taxon>Pseudomonadota</taxon>
        <taxon>Betaproteobacteria</taxon>
        <taxon>Neisseriales</taxon>
        <taxon>Neisseriaceae</taxon>
        <taxon>Neisseria</taxon>
    </lineage>
</organism>